<reference key="1">
    <citation type="journal article" date="1997" name="DNA Res.">
        <title>Structural analysis of Arabidopsis thaliana chromosome 5. I. Sequence features of the 1.6 Mb regions covered by twenty physically assigned P1 clones.</title>
        <authorList>
            <person name="Sato S."/>
            <person name="Kotani H."/>
            <person name="Nakamura Y."/>
            <person name="Kaneko T."/>
            <person name="Asamizu E."/>
            <person name="Fukami M."/>
            <person name="Miyajima N."/>
            <person name="Tabata S."/>
        </authorList>
    </citation>
    <scope>NUCLEOTIDE SEQUENCE [LARGE SCALE GENOMIC DNA]</scope>
    <source>
        <strain>cv. Columbia</strain>
    </source>
</reference>
<reference key="2">
    <citation type="journal article" date="2000" name="Nature">
        <title>Sequence and analysis of chromosome 5 of the plant Arabidopsis thaliana.</title>
        <authorList>
            <person name="Tabata S."/>
            <person name="Kaneko T."/>
            <person name="Nakamura Y."/>
            <person name="Kotani H."/>
            <person name="Kato T."/>
            <person name="Asamizu E."/>
            <person name="Miyajima N."/>
            <person name="Sasamoto S."/>
            <person name="Kimura T."/>
            <person name="Hosouchi T."/>
            <person name="Kawashima K."/>
            <person name="Kohara M."/>
            <person name="Matsumoto M."/>
            <person name="Matsuno A."/>
            <person name="Muraki A."/>
            <person name="Nakayama S."/>
            <person name="Nakazaki N."/>
            <person name="Naruo K."/>
            <person name="Okumura S."/>
            <person name="Shinpo S."/>
            <person name="Takeuchi C."/>
            <person name="Wada T."/>
            <person name="Watanabe A."/>
            <person name="Yamada M."/>
            <person name="Yasuda M."/>
            <person name="Sato S."/>
            <person name="de la Bastide M."/>
            <person name="Huang E."/>
            <person name="Spiegel L."/>
            <person name="Gnoj L."/>
            <person name="O'Shaughnessy A."/>
            <person name="Preston R."/>
            <person name="Habermann K."/>
            <person name="Murray J."/>
            <person name="Johnson D."/>
            <person name="Rohlfing T."/>
            <person name="Nelson J."/>
            <person name="Stoneking T."/>
            <person name="Pepin K."/>
            <person name="Spieth J."/>
            <person name="Sekhon M."/>
            <person name="Armstrong J."/>
            <person name="Becker M."/>
            <person name="Belter E."/>
            <person name="Cordum H."/>
            <person name="Cordes M."/>
            <person name="Courtney L."/>
            <person name="Courtney W."/>
            <person name="Dante M."/>
            <person name="Du H."/>
            <person name="Edwards J."/>
            <person name="Fryman J."/>
            <person name="Haakensen B."/>
            <person name="Lamar E."/>
            <person name="Latreille P."/>
            <person name="Leonard S."/>
            <person name="Meyer R."/>
            <person name="Mulvaney E."/>
            <person name="Ozersky P."/>
            <person name="Riley A."/>
            <person name="Strowmatt C."/>
            <person name="Wagner-McPherson C."/>
            <person name="Wollam A."/>
            <person name="Yoakum M."/>
            <person name="Bell M."/>
            <person name="Dedhia N."/>
            <person name="Parnell L."/>
            <person name="Shah R."/>
            <person name="Rodriguez M."/>
            <person name="Hoon See L."/>
            <person name="Vil D."/>
            <person name="Baker J."/>
            <person name="Kirchoff K."/>
            <person name="Toth K."/>
            <person name="King L."/>
            <person name="Bahret A."/>
            <person name="Miller B."/>
            <person name="Marra M.A."/>
            <person name="Martienssen R."/>
            <person name="McCombie W.R."/>
            <person name="Wilson R.K."/>
            <person name="Murphy G."/>
            <person name="Bancroft I."/>
            <person name="Volckaert G."/>
            <person name="Wambutt R."/>
            <person name="Duesterhoeft A."/>
            <person name="Stiekema W."/>
            <person name="Pohl T."/>
            <person name="Entian K.-D."/>
            <person name="Terryn N."/>
            <person name="Hartley N."/>
            <person name="Bent E."/>
            <person name="Johnson S."/>
            <person name="Langham S.-A."/>
            <person name="McCullagh B."/>
            <person name="Robben J."/>
            <person name="Grymonprez B."/>
            <person name="Zimmermann W."/>
            <person name="Ramsperger U."/>
            <person name="Wedler H."/>
            <person name="Balke K."/>
            <person name="Wedler E."/>
            <person name="Peters S."/>
            <person name="van Staveren M."/>
            <person name="Dirkse W."/>
            <person name="Mooijman P."/>
            <person name="Klein Lankhorst R."/>
            <person name="Weitzenegger T."/>
            <person name="Bothe G."/>
            <person name="Rose M."/>
            <person name="Hauf J."/>
            <person name="Berneiser S."/>
            <person name="Hempel S."/>
            <person name="Feldpausch M."/>
            <person name="Lamberth S."/>
            <person name="Villarroel R."/>
            <person name="Gielen J."/>
            <person name="Ardiles W."/>
            <person name="Bents O."/>
            <person name="Lemcke K."/>
            <person name="Kolesov G."/>
            <person name="Mayer K.F.X."/>
            <person name="Rudd S."/>
            <person name="Schoof H."/>
            <person name="Schueller C."/>
            <person name="Zaccaria P."/>
            <person name="Mewes H.-W."/>
            <person name="Bevan M."/>
            <person name="Fransz P.F."/>
        </authorList>
    </citation>
    <scope>NUCLEOTIDE SEQUENCE [LARGE SCALE GENOMIC DNA]</scope>
    <source>
        <strain>cv. Columbia</strain>
    </source>
</reference>
<reference key="3">
    <citation type="journal article" date="2017" name="Plant J.">
        <title>Araport11: a complete reannotation of the Arabidopsis thaliana reference genome.</title>
        <authorList>
            <person name="Cheng C.Y."/>
            <person name="Krishnakumar V."/>
            <person name="Chan A.P."/>
            <person name="Thibaud-Nissen F."/>
            <person name="Schobel S."/>
            <person name="Town C.D."/>
        </authorList>
    </citation>
    <scope>GENOME REANNOTATION</scope>
    <source>
        <strain>cv. Columbia</strain>
    </source>
</reference>
<reference key="4">
    <citation type="journal article" date="2002" name="Science">
        <title>Functional annotation of a full-length Arabidopsis cDNA collection.</title>
        <authorList>
            <person name="Seki M."/>
            <person name="Narusaka M."/>
            <person name="Kamiya A."/>
            <person name="Ishida J."/>
            <person name="Satou M."/>
            <person name="Sakurai T."/>
            <person name="Nakajima M."/>
            <person name="Enju A."/>
            <person name="Akiyama K."/>
            <person name="Oono Y."/>
            <person name="Muramatsu M."/>
            <person name="Hayashizaki Y."/>
            <person name="Kawai J."/>
            <person name="Carninci P."/>
            <person name="Itoh M."/>
            <person name="Ishii Y."/>
            <person name="Arakawa T."/>
            <person name="Shibata K."/>
            <person name="Shinagawa A."/>
            <person name="Shinozaki K."/>
        </authorList>
    </citation>
    <scope>NUCLEOTIDE SEQUENCE [LARGE SCALE MRNA] (ISOFORM 1)</scope>
    <source>
        <strain>cv. Columbia</strain>
    </source>
</reference>
<reference key="5">
    <citation type="journal article" date="2003" name="Science">
        <title>Empirical analysis of transcriptional activity in the Arabidopsis genome.</title>
        <authorList>
            <person name="Yamada K."/>
            <person name="Lim J."/>
            <person name="Dale J.M."/>
            <person name="Chen H."/>
            <person name="Shinn P."/>
            <person name="Palm C.J."/>
            <person name="Southwick A.M."/>
            <person name="Wu H.C."/>
            <person name="Kim C.J."/>
            <person name="Nguyen M."/>
            <person name="Pham P.K."/>
            <person name="Cheuk R.F."/>
            <person name="Karlin-Newmann G."/>
            <person name="Liu S.X."/>
            <person name="Lam B."/>
            <person name="Sakano H."/>
            <person name="Wu T."/>
            <person name="Yu G."/>
            <person name="Miranda M."/>
            <person name="Quach H.L."/>
            <person name="Tripp M."/>
            <person name="Chang C.H."/>
            <person name="Lee J.M."/>
            <person name="Toriumi M.J."/>
            <person name="Chan M.M."/>
            <person name="Tang C.C."/>
            <person name="Onodera C.S."/>
            <person name="Deng J.M."/>
            <person name="Akiyama K."/>
            <person name="Ansari Y."/>
            <person name="Arakawa T."/>
            <person name="Banh J."/>
            <person name="Banno F."/>
            <person name="Bowser L."/>
            <person name="Brooks S.Y."/>
            <person name="Carninci P."/>
            <person name="Chao Q."/>
            <person name="Choy N."/>
            <person name="Enju A."/>
            <person name="Goldsmith A.D."/>
            <person name="Gurjal M."/>
            <person name="Hansen N.F."/>
            <person name="Hayashizaki Y."/>
            <person name="Johnson-Hopson C."/>
            <person name="Hsuan V.W."/>
            <person name="Iida K."/>
            <person name="Karnes M."/>
            <person name="Khan S."/>
            <person name="Koesema E."/>
            <person name="Ishida J."/>
            <person name="Jiang P.X."/>
            <person name="Jones T."/>
            <person name="Kawai J."/>
            <person name="Kamiya A."/>
            <person name="Meyers C."/>
            <person name="Nakajima M."/>
            <person name="Narusaka M."/>
            <person name="Seki M."/>
            <person name="Sakurai T."/>
            <person name="Satou M."/>
            <person name="Tamse R."/>
            <person name="Vaysberg M."/>
            <person name="Wallender E.K."/>
            <person name="Wong C."/>
            <person name="Yamamura Y."/>
            <person name="Yuan S."/>
            <person name="Shinozaki K."/>
            <person name="Davis R.W."/>
            <person name="Theologis A."/>
            <person name="Ecker J.R."/>
        </authorList>
    </citation>
    <scope>NUCLEOTIDE SEQUENCE [LARGE SCALE MRNA] (ISOFORM 2)</scope>
    <source>
        <strain>cv. Columbia</strain>
    </source>
</reference>
<reference key="6">
    <citation type="submission" date="2002-03" db="EMBL/GenBank/DDBJ databases">
        <title>Full-length cDNA from Arabidopsis thaliana.</title>
        <authorList>
            <person name="Brover V.V."/>
            <person name="Troukhan M.E."/>
            <person name="Alexandrov N.A."/>
            <person name="Lu Y.-P."/>
            <person name="Flavell R.B."/>
            <person name="Feldmann K.A."/>
        </authorList>
    </citation>
    <scope>NUCLEOTIDE SEQUENCE [LARGE SCALE MRNA] (ISOFORM 1)</scope>
</reference>
<gene>
    <name type="ordered locus">At5g03900</name>
    <name type="ORF">F8F6_110</name>
    <name type="ORF">MED24.20</name>
</gene>
<name>Y5390_ARATH</name>
<keyword id="KW-0025">Alternative splicing</keyword>
<keyword id="KW-0150">Chloroplast</keyword>
<keyword id="KW-0472">Membrane</keyword>
<keyword id="KW-0934">Plastid</keyword>
<keyword id="KW-1185">Reference proteome</keyword>
<keyword id="KW-0809">Transit peptide</keyword>
<keyword id="KW-0812">Transmembrane</keyword>
<keyword id="KW-1133">Transmembrane helix</keyword>
<protein>
    <recommendedName>
        <fullName>Uncharacterized protein At5g03900, chloroplastic</fullName>
    </recommendedName>
</protein>
<proteinExistence type="evidence at transcript level"/>
<feature type="transit peptide" description="Chloroplast" evidence="3">
    <location>
        <begin position="1"/>
        <end position="63"/>
    </location>
</feature>
<feature type="chain" id="PRO_0000223683" description="Uncharacterized protein At5g03900, chloroplastic">
    <location>
        <begin position="64"/>
        <end position="523"/>
    </location>
</feature>
<feature type="transmembrane region" description="Helical" evidence="1">
    <location>
        <begin position="180"/>
        <end position="200"/>
    </location>
</feature>
<feature type="transmembrane region" description="Helical" evidence="1">
    <location>
        <begin position="386"/>
        <end position="406"/>
    </location>
</feature>
<feature type="transmembrane region" description="Helical" evidence="1">
    <location>
        <begin position="423"/>
        <end position="443"/>
    </location>
</feature>
<feature type="splice variant" id="VSP_017285" description="In isoform 2." evidence="2">
    <original>I</original>
    <variation>V</variation>
    <location>
        <position position="429"/>
    </location>
</feature>
<feature type="splice variant" id="VSP_017286" description="In isoform 2." evidence="2">
    <location>
        <begin position="430"/>
        <end position="523"/>
    </location>
</feature>
<feature type="sequence conflict" description="In Ref. 4; BAC43704." evidence="3" ref="4">
    <original>V</original>
    <variation>A</variation>
    <location>
        <position position="229"/>
    </location>
</feature>
<feature type="sequence conflict" description="In Ref. 6; AAM61083." evidence="3" ref="6">
    <original>C</original>
    <variation>R</variation>
    <location>
        <position position="338"/>
    </location>
</feature>
<feature type="sequence conflict" description="In Ref. 4; BAC43704." evidence="3" ref="4">
    <original>K</original>
    <variation>R</variation>
    <location>
        <position position="368"/>
    </location>
</feature>
<comment type="subcellular location">
    <subcellularLocation>
        <location evidence="1">Plastid</location>
        <location evidence="1">Chloroplast membrane</location>
        <topology evidence="1">Multi-pass membrane protein</topology>
    </subcellularLocation>
</comment>
<comment type="alternative products">
    <event type="alternative splicing"/>
    <isoform>
        <id>Q8GW20-1</id>
        <name>1</name>
        <sequence type="displayed"/>
    </isoform>
    <isoform>
        <id>Q8GW20-2</id>
        <name>2</name>
        <sequence type="described" ref="VSP_017285 VSP_017286"/>
    </isoform>
</comment>
<comment type="miscellaneous">
    <molecule>Isoform 2</molecule>
    <text evidence="3">May be due to intron retention.</text>
</comment>
<comment type="sequence caution" evidence="3">
    <conflict type="erroneous gene model prediction">
        <sequence resource="EMBL-CDS" id="BAB08616"/>
    </conflict>
    <text>The predicted gene At5g03900 has been split into 2 genes: At5g03900 and At5g03905.</text>
</comment>
<comment type="sequence caution" evidence="3">
    <conflict type="erroneous gene model prediction">
        <sequence resource="EMBL-CDS" id="CAB85510"/>
    </conflict>
    <text>The predicted gene At5g03900 has been split into 2 genes: At5g03900 and At5g03905.</text>
</comment>
<sequence length="523" mass="59501">MACVSTCLILSPRLTQVGLSSKKPFLIRLRSPVDRYSFPRMLTERCLSTRRKFNRHGIAVVKAASLDKVSGAIKPGGLVESDKLPTDVRKRAMDAVDECGRRVTVGDVASRGGLKVTEAQTALQAIAADTDGFLEVSDEGDVLYVFPRDYRTKLAAKSLRIQIEPFLEKAKGAVDYLARVSFGTALIASIVIVYTSIIALLSSKSEDDNRQRRRGRSYDSGFNFYINPVDLLWYWDPNYYNRRRAREDEGKGMNFIESVFSFVFGDGDPNQGIEEERWQMIGQYITSRGGVVAADELAPYLDVPSSKSAMNDESYILPVLLRFDGQPELDEEGNILYCFPSLQRTASGSSRRKEYVGKWFDWVADMEKFFKEKKWQFSKTSTSERALVIGLGAVNLFGVIVLNTLLNEMSVRPGGFLTFVKNIYPLLQIYAGSFFTIPLIRWFSIKRKNNQIENRNKARLQFARALESPDIALRRKLLSARDMAQKTVIGKDRIVYSTDRDMMEQNYETDEWDRRFKELEKSD</sequence>
<dbReference type="EMBL" id="AB005235">
    <property type="protein sequence ID" value="BAB08616.1"/>
    <property type="status" value="ALT_SEQ"/>
    <property type="molecule type" value="Genomic_DNA"/>
</dbReference>
<dbReference type="EMBL" id="AL162873">
    <property type="protein sequence ID" value="CAB85510.1"/>
    <property type="status" value="ALT_SEQ"/>
    <property type="molecule type" value="Genomic_DNA"/>
</dbReference>
<dbReference type="EMBL" id="CP002688">
    <property type="protein sequence ID" value="AED90668.1"/>
    <property type="molecule type" value="Genomic_DNA"/>
</dbReference>
<dbReference type="EMBL" id="CP002688">
    <property type="protein sequence ID" value="AED90669.1"/>
    <property type="molecule type" value="Genomic_DNA"/>
</dbReference>
<dbReference type="EMBL" id="AK119134">
    <property type="protein sequence ID" value="BAC43704.1"/>
    <property type="molecule type" value="mRNA"/>
</dbReference>
<dbReference type="EMBL" id="AY099567">
    <property type="protein sequence ID" value="AAM20419.1"/>
    <property type="molecule type" value="mRNA"/>
</dbReference>
<dbReference type="EMBL" id="BT006578">
    <property type="protein sequence ID" value="AAP31922.1"/>
    <property type="molecule type" value="mRNA"/>
</dbReference>
<dbReference type="EMBL" id="AY084515">
    <property type="protein sequence ID" value="AAM61083.1"/>
    <property type="molecule type" value="mRNA"/>
</dbReference>
<dbReference type="PIR" id="T48417">
    <property type="entry name" value="T48417"/>
</dbReference>
<dbReference type="RefSeq" id="NP_568129.1">
    <molecule id="Q8GW20-1"/>
    <property type="nucleotide sequence ID" value="NM_120471.4"/>
</dbReference>
<dbReference type="RefSeq" id="NP_850761.1">
    <molecule id="Q8GW20-2"/>
    <property type="nucleotide sequence ID" value="NM_180430.2"/>
</dbReference>
<dbReference type="SMR" id="Q8GW20"/>
<dbReference type="FunCoup" id="Q8GW20">
    <property type="interactions" value="1332"/>
</dbReference>
<dbReference type="STRING" id="3702.Q8GW20"/>
<dbReference type="GlyGen" id="Q8GW20">
    <property type="glycosylation" value="1 site"/>
</dbReference>
<dbReference type="PaxDb" id="3702-AT5G03900.2"/>
<dbReference type="ProteomicsDB" id="243160">
    <molecule id="Q8GW20-1"/>
</dbReference>
<dbReference type="EnsemblPlants" id="AT5G03900.1">
    <molecule id="Q8GW20-2"/>
    <property type="protein sequence ID" value="AT5G03900.1"/>
    <property type="gene ID" value="AT5G03900"/>
</dbReference>
<dbReference type="EnsemblPlants" id="AT5G03900.2">
    <molecule id="Q8GW20-1"/>
    <property type="protein sequence ID" value="AT5G03900.2"/>
    <property type="gene ID" value="AT5G03900"/>
</dbReference>
<dbReference type="GeneID" id="831927"/>
<dbReference type="Gramene" id="AT5G03900.1">
    <molecule id="Q8GW20-2"/>
    <property type="protein sequence ID" value="AT5G03900.1"/>
    <property type="gene ID" value="AT5G03900"/>
</dbReference>
<dbReference type="Gramene" id="AT5G03900.2">
    <molecule id="Q8GW20-1"/>
    <property type="protein sequence ID" value="AT5G03900.2"/>
    <property type="gene ID" value="AT5G03900"/>
</dbReference>
<dbReference type="KEGG" id="ath:AT5G03900"/>
<dbReference type="Araport" id="AT5G03900"/>
<dbReference type="TAIR" id="AT5G03900"/>
<dbReference type="eggNOG" id="KOG1119">
    <property type="taxonomic scope" value="Eukaryota"/>
</dbReference>
<dbReference type="InParanoid" id="Q8GW20"/>
<dbReference type="OMA" id="PLIRYFW"/>
<dbReference type="PhylomeDB" id="Q8GW20"/>
<dbReference type="PRO" id="PR:Q8GW20"/>
<dbReference type="Proteomes" id="UP000006548">
    <property type="component" value="Chromosome 5"/>
</dbReference>
<dbReference type="ExpressionAtlas" id="Q8GW20">
    <property type="expression patterns" value="baseline and differential"/>
</dbReference>
<dbReference type="GO" id="GO:0009941">
    <property type="term" value="C:chloroplast envelope"/>
    <property type="evidence" value="ECO:0007005"/>
    <property type="project" value="TAIR"/>
</dbReference>
<dbReference type="GO" id="GO:0031969">
    <property type="term" value="C:chloroplast membrane"/>
    <property type="evidence" value="ECO:0007669"/>
    <property type="project" value="UniProtKB-SubCell"/>
</dbReference>
<dbReference type="GO" id="GO:0009536">
    <property type="term" value="C:plastid"/>
    <property type="evidence" value="ECO:0007005"/>
    <property type="project" value="TAIR"/>
</dbReference>
<dbReference type="InterPro" id="IPR044200">
    <property type="entry name" value="At5g03900-like"/>
</dbReference>
<dbReference type="PANTHER" id="PTHR47380">
    <property type="entry name" value="OS02G0533000 PROTEIN"/>
    <property type="match status" value="1"/>
</dbReference>
<dbReference type="PANTHER" id="PTHR47380:SF4">
    <property type="entry name" value="OS02G0533000 PROTEIN"/>
    <property type="match status" value="1"/>
</dbReference>
<accession>Q8GW20</accession>
<accession>Q8L632</accession>
<accession>Q8LG15</accession>
<accession>Q9FFM9</accession>
<accession>Q9LZB9</accession>
<organism>
    <name type="scientific">Arabidopsis thaliana</name>
    <name type="common">Mouse-ear cress</name>
    <dbReference type="NCBI Taxonomy" id="3702"/>
    <lineage>
        <taxon>Eukaryota</taxon>
        <taxon>Viridiplantae</taxon>
        <taxon>Streptophyta</taxon>
        <taxon>Embryophyta</taxon>
        <taxon>Tracheophyta</taxon>
        <taxon>Spermatophyta</taxon>
        <taxon>Magnoliopsida</taxon>
        <taxon>eudicotyledons</taxon>
        <taxon>Gunneridae</taxon>
        <taxon>Pentapetalae</taxon>
        <taxon>rosids</taxon>
        <taxon>malvids</taxon>
        <taxon>Brassicales</taxon>
        <taxon>Brassicaceae</taxon>
        <taxon>Camelineae</taxon>
        <taxon>Arabidopsis</taxon>
    </lineage>
</organism>
<evidence type="ECO:0000255" key="1"/>
<evidence type="ECO:0000303" key="2">
    <source>
    </source>
</evidence>
<evidence type="ECO:0000305" key="3"/>